<protein>
    <recommendedName>
        <fullName evidence="1">Small ribosomal subunit protein bS21</fullName>
    </recommendedName>
    <alternativeName>
        <fullName>30S ribosomal protein S21</fullName>
    </alternativeName>
</protein>
<comment type="similarity">
    <text evidence="1">Belongs to the bacterial ribosomal protein bS21 family.</text>
</comment>
<reference key="1">
    <citation type="journal article" date="1995" name="Int. J. Syst. Bacteriol.">
        <title>Comparative ribosomal protein sequence analyses of a phylogenetically defined genus, Pseudomonas, and its relatives.</title>
        <authorList>
            <person name="Ochi K."/>
        </authorList>
    </citation>
    <scope>PROTEIN SEQUENCE</scope>
    <source>
        <strain>ATCC 11426 / DSM 7226 / JCM 1477 / LMG 2350 / NBRC 12165 / NCIMB 1945 / NCTC 10900</strain>
    </source>
</reference>
<proteinExistence type="evidence at protein level"/>
<dbReference type="GO" id="GO:1990904">
    <property type="term" value="C:ribonucleoprotein complex"/>
    <property type="evidence" value="ECO:0007669"/>
    <property type="project" value="UniProtKB-KW"/>
</dbReference>
<dbReference type="GO" id="GO:0005840">
    <property type="term" value="C:ribosome"/>
    <property type="evidence" value="ECO:0007669"/>
    <property type="project" value="UniProtKB-KW"/>
</dbReference>
<name>RS21_BREVE</name>
<keyword id="KW-0903">Direct protein sequencing</keyword>
<keyword id="KW-0687">Ribonucleoprotein</keyword>
<keyword id="KW-0689">Ribosomal protein</keyword>
<gene>
    <name type="primary">rpsU</name>
</gene>
<accession>Q9R4P1</accession>
<organism>
    <name type="scientific">Brevundimonas vesicularis</name>
    <name type="common">Pseudomonas vesicularis</name>
    <dbReference type="NCBI Taxonomy" id="41276"/>
    <lineage>
        <taxon>Bacteria</taxon>
        <taxon>Pseudomonadati</taxon>
        <taxon>Pseudomonadota</taxon>
        <taxon>Alphaproteobacteria</taxon>
        <taxon>Caulobacterales</taxon>
        <taxon>Caulobacteraceae</taxon>
        <taxon>Brevundimonas</taxon>
    </lineage>
</organism>
<feature type="chain" id="PRO_0000223998" description="Small ribosomal subunit protein bS21">
    <location>
        <begin position="1"/>
        <end position="18" status="greater than"/>
    </location>
</feature>
<feature type="non-terminal residue">
    <location>
        <position position="18"/>
    </location>
</feature>
<sequence>VQIFVRDNNVDQALKALK</sequence>
<evidence type="ECO:0000305" key="1"/>